<comment type="function">
    <text evidence="1">Involved in the gluconeogenesis. Catalyzes stereospecifically the conversion of dihydroxyacetone phosphate (DHAP) to D-glyceraldehyde-3-phosphate (G3P).</text>
</comment>
<comment type="catalytic activity">
    <reaction evidence="1">
        <text>D-glyceraldehyde 3-phosphate = dihydroxyacetone phosphate</text>
        <dbReference type="Rhea" id="RHEA:18585"/>
        <dbReference type="ChEBI" id="CHEBI:57642"/>
        <dbReference type="ChEBI" id="CHEBI:59776"/>
        <dbReference type="EC" id="5.3.1.1"/>
    </reaction>
</comment>
<comment type="pathway">
    <text evidence="1">Carbohydrate biosynthesis; gluconeogenesis.</text>
</comment>
<comment type="pathway">
    <text evidence="1">Carbohydrate degradation; glycolysis; D-glyceraldehyde 3-phosphate from glycerone phosphate: step 1/1.</text>
</comment>
<comment type="subunit">
    <text evidence="1">Homodimer.</text>
</comment>
<comment type="subcellular location">
    <subcellularLocation>
        <location evidence="1">Cytoplasm</location>
    </subcellularLocation>
</comment>
<comment type="similarity">
    <text evidence="1">Belongs to the triosephosphate isomerase family.</text>
</comment>
<evidence type="ECO:0000255" key="1">
    <source>
        <dbReference type="HAMAP-Rule" id="MF_00147"/>
    </source>
</evidence>
<feature type="chain" id="PRO_1000096493" description="Triosephosphate isomerase">
    <location>
        <begin position="1"/>
        <end position="249"/>
    </location>
</feature>
<feature type="active site" description="Electrophile" evidence="1">
    <location>
        <position position="95"/>
    </location>
</feature>
<feature type="active site" description="Proton acceptor" evidence="1">
    <location>
        <position position="167"/>
    </location>
</feature>
<feature type="binding site" evidence="1">
    <location>
        <begin position="9"/>
        <end position="11"/>
    </location>
    <ligand>
        <name>substrate</name>
    </ligand>
</feature>
<feature type="binding site" evidence="1">
    <location>
        <position position="173"/>
    </location>
    <ligand>
        <name>substrate</name>
    </ligand>
</feature>
<feature type="binding site" evidence="1">
    <location>
        <position position="213"/>
    </location>
    <ligand>
        <name>substrate</name>
    </ligand>
</feature>
<feature type="binding site" evidence="1">
    <location>
        <begin position="234"/>
        <end position="235"/>
    </location>
    <ligand>
        <name>substrate</name>
    </ligand>
</feature>
<reference key="1">
    <citation type="journal article" date="2014" name="Genome Announc.">
        <title>Complete Genome Sequence of the Extreme Thermophile Dictyoglomus thermophilum H-6-12.</title>
        <authorList>
            <person name="Coil D.A."/>
            <person name="Badger J.H."/>
            <person name="Forberger H.C."/>
            <person name="Riggs F."/>
            <person name="Madupu R."/>
            <person name="Fedorova N."/>
            <person name="Ward N."/>
            <person name="Robb F.T."/>
            <person name="Eisen J.A."/>
        </authorList>
    </citation>
    <scope>NUCLEOTIDE SEQUENCE [LARGE SCALE GENOMIC DNA]</scope>
    <source>
        <strain>ATCC 35947 / DSM 3960 / H-6-12</strain>
    </source>
</reference>
<dbReference type="EC" id="5.3.1.1" evidence="1"/>
<dbReference type="EMBL" id="CP001146">
    <property type="protein sequence ID" value="ACI18693.1"/>
    <property type="molecule type" value="Genomic_DNA"/>
</dbReference>
<dbReference type="RefSeq" id="WP_012547325.1">
    <property type="nucleotide sequence ID" value="NC_011297.1"/>
</dbReference>
<dbReference type="SMR" id="B5YE97"/>
<dbReference type="STRING" id="309799.DICTH_1005"/>
<dbReference type="PaxDb" id="309799-DICTH_1005"/>
<dbReference type="KEGG" id="dth:DICTH_1005"/>
<dbReference type="eggNOG" id="COG0149">
    <property type="taxonomic scope" value="Bacteria"/>
</dbReference>
<dbReference type="HOGENOM" id="CLU_024251_2_3_0"/>
<dbReference type="OrthoDB" id="9809429at2"/>
<dbReference type="UniPathway" id="UPA00109">
    <property type="reaction ID" value="UER00189"/>
</dbReference>
<dbReference type="UniPathway" id="UPA00138"/>
<dbReference type="Proteomes" id="UP000001733">
    <property type="component" value="Chromosome"/>
</dbReference>
<dbReference type="GO" id="GO:0005829">
    <property type="term" value="C:cytosol"/>
    <property type="evidence" value="ECO:0007669"/>
    <property type="project" value="TreeGrafter"/>
</dbReference>
<dbReference type="GO" id="GO:0004807">
    <property type="term" value="F:triose-phosphate isomerase activity"/>
    <property type="evidence" value="ECO:0007669"/>
    <property type="project" value="UniProtKB-UniRule"/>
</dbReference>
<dbReference type="GO" id="GO:0006094">
    <property type="term" value="P:gluconeogenesis"/>
    <property type="evidence" value="ECO:0007669"/>
    <property type="project" value="UniProtKB-UniRule"/>
</dbReference>
<dbReference type="GO" id="GO:0046166">
    <property type="term" value="P:glyceraldehyde-3-phosphate biosynthetic process"/>
    <property type="evidence" value="ECO:0007669"/>
    <property type="project" value="TreeGrafter"/>
</dbReference>
<dbReference type="GO" id="GO:0019563">
    <property type="term" value="P:glycerol catabolic process"/>
    <property type="evidence" value="ECO:0007669"/>
    <property type="project" value="TreeGrafter"/>
</dbReference>
<dbReference type="GO" id="GO:0006096">
    <property type="term" value="P:glycolytic process"/>
    <property type="evidence" value="ECO:0007669"/>
    <property type="project" value="UniProtKB-UniRule"/>
</dbReference>
<dbReference type="CDD" id="cd00311">
    <property type="entry name" value="TIM"/>
    <property type="match status" value="1"/>
</dbReference>
<dbReference type="FunFam" id="3.20.20.70:FF:000016">
    <property type="entry name" value="Triosephosphate isomerase"/>
    <property type="match status" value="1"/>
</dbReference>
<dbReference type="Gene3D" id="3.20.20.70">
    <property type="entry name" value="Aldolase class I"/>
    <property type="match status" value="1"/>
</dbReference>
<dbReference type="HAMAP" id="MF_00147_B">
    <property type="entry name" value="TIM_B"/>
    <property type="match status" value="1"/>
</dbReference>
<dbReference type="InterPro" id="IPR013785">
    <property type="entry name" value="Aldolase_TIM"/>
</dbReference>
<dbReference type="InterPro" id="IPR035990">
    <property type="entry name" value="TIM_sf"/>
</dbReference>
<dbReference type="InterPro" id="IPR022896">
    <property type="entry name" value="TrioseP_Isoase_bac/euk"/>
</dbReference>
<dbReference type="InterPro" id="IPR000652">
    <property type="entry name" value="Triosephosphate_isomerase"/>
</dbReference>
<dbReference type="InterPro" id="IPR020861">
    <property type="entry name" value="Triosephosphate_isomerase_AS"/>
</dbReference>
<dbReference type="NCBIfam" id="TIGR00419">
    <property type="entry name" value="tim"/>
    <property type="match status" value="1"/>
</dbReference>
<dbReference type="PANTHER" id="PTHR21139">
    <property type="entry name" value="TRIOSEPHOSPHATE ISOMERASE"/>
    <property type="match status" value="1"/>
</dbReference>
<dbReference type="PANTHER" id="PTHR21139:SF42">
    <property type="entry name" value="TRIOSEPHOSPHATE ISOMERASE"/>
    <property type="match status" value="1"/>
</dbReference>
<dbReference type="Pfam" id="PF00121">
    <property type="entry name" value="TIM"/>
    <property type="match status" value="1"/>
</dbReference>
<dbReference type="SUPFAM" id="SSF51351">
    <property type="entry name" value="Triosephosphate isomerase (TIM)"/>
    <property type="match status" value="1"/>
</dbReference>
<dbReference type="PROSITE" id="PS00171">
    <property type="entry name" value="TIM_1"/>
    <property type="match status" value="1"/>
</dbReference>
<dbReference type="PROSITE" id="PS51440">
    <property type="entry name" value="TIM_2"/>
    <property type="match status" value="1"/>
</dbReference>
<organism>
    <name type="scientific">Dictyoglomus thermophilum (strain ATCC 35947 / DSM 3960 / H-6-12)</name>
    <dbReference type="NCBI Taxonomy" id="309799"/>
    <lineage>
        <taxon>Bacteria</taxon>
        <taxon>Pseudomonadati</taxon>
        <taxon>Dictyoglomota</taxon>
        <taxon>Dictyoglomia</taxon>
        <taxon>Dictyoglomales</taxon>
        <taxon>Dictyoglomaceae</taxon>
        <taxon>Dictyoglomus</taxon>
    </lineage>
</organism>
<sequence length="249" mass="28283">MRRKIIAANWKMYKTCAETESFIKEFIELSKGYEEKEIVICPPFTSLYVASKLLKDTAIKLGAQNMFWEKEGAYTGEISPIMLKDLNCTYVIIGHSERRNYFSETNEMINKKIKSAFNYGLIPIFCVGEKWEERERGKTEEVITKQVREGLEGLEKENVEKIVIAYEPVWAIGTGHSAKGEDANEVAGLIRKIISEMYDTEVSQKIRIQYGGSVNPQNITEFLSQNEIDGALVGGASLKPQSFWNIVKS</sequence>
<keyword id="KW-0963">Cytoplasm</keyword>
<keyword id="KW-0312">Gluconeogenesis</keyword>
<keyword id="KW-0324">Glycolysis</keyword>
<keyword id="KW-0413">Isomerase</keyword>
<gene>
    <name evidence="1" type="primary">tpiA</name>
    <name type="ordered locus">DICTH_1005</name>
</gene>
<accession>B5YE97</accession>
<name>TPIS_DICT6</name>
<proteinExistence type="inferred from homology"/>
<protein>
    <recommendedName>
        <fullName evidence="1">Triosephosphate isomerase</fullName>
        <shortName evidence="1">TIM</shortName>
        <shortName evidence="1">TPI</shortName>
        <ecNumber evidence="1">5.3.1.1</ecNumber>
    </recommendedName>
    <alternativeName>
        <fullName evidence="1">Triose-phosphate isomerase</fullName>
    </alternativeName>
</protein>